<organism>
    <name type="scientific">Homo sapiens</name>
    <name type="common">Human</name>
    <dbReference type="NCBI Taxonomy" id="9606"/>
    <lineage>
        <taxon>Eukaryota</taxon>
        <taxon>Metazoa</taxon>
        <taxon>Chordata</taxon>
        <taxon>Craniata</taxon>
        <taxon>Vertebrata</taxon>
        <taxon>Euteleostomi</taxon>
        <taxon>Mammalia</taxon>
        <taxon>Eutheria</taxon>
        <taxon>Euarchontoglires</taxon>
        <taxon>Primates</taxon>
        <taxon>Haplorrhini</taxon>
        <taxon>Catarrhini</taxon>
        <taxon>Hominidae</taxon>
        <taxon>Homo</taxon>
    </lineage>
</organism>
<evidence type="ECO:0000250" key="1">
    <source>
        <dbReference type="UniProtKB" id="P61969"/>
    </source>
</evidence>
<evidence type="ECO:0000255" key="2">
    <source>
        <dbReference type="PROSITE-ProRule" id="PRU00125"/>
    </source>
</evidence>
<evidence type="ECO:0000269" key="3">
    <source>
    </source>
</evidence>
<evidence type="ECO:0007829" key="4">
    <source>
        <dbReference type="PDB" id="9F5B"/>
    </source>
</evidence>
<comment type="function">
    <text evidence="1">Transcription cofactor. Plays a role in establishing motor neuron identity, in concert with MNX1, acting, at least in part, to disrupt LDB1-LHX3 complexes thereby negatively modulating interneuron genes in motor neurons.</text>
</comment>
<comment type="subunit">
    <text evidence="1 3">Interacts strongly with LDBS. Interacts with LDB2 and LDB1. Interaction with complexes consisting of at least LDB1 and LHX3, acts to disassemble the complex; may preferentially disassemble LDB1-LHX3 complexes rather than complexes consisting of LDB1, LHX3 and ISL1. Interacts (via the LIM zinc-binding domain 1) with RBBP8 (PubMed:23353824). Interacts with both RPPB8 and LDB1 through the same face and cannot bind to both proteins simultaneously (By similarity). Interacts with BRCA1 (via the BRCT domains); the interaction represses BRCA1 transcriptional activity. Interacts with DEAF1; LMO4 blocks export from nucleus.</text>
</comment>
<comment type="interaction">
    <interactant intactId="EBI-2798728">
        <id>P61968</id>
    </interactant>
    <interactant intactId="EBI-5463075">
        <id>Q4LEZ3</id>
        <label>AARD</label>
    </interactant>
    <organismsDiffer>false</organismsDiffer>
    <experiments>3</experiments>
</comment>
<comment type="interaction">
    <interactant intactId="EBI-2798728">
        <id>P61968</id>
    </interactant>
    <interactant intactId="EBI-11096309">
        <id>Q9NYB9-2</id>
        <label>ABI2</label>
    </interactant>
    <organismsDiffer>false</organismsDiffer>
    <experiments>3</experiments>
</comment>
<comment type="interaction">
    <interactant intactId="EBI-2798728">
        <id>P61968</id>
    </interactant>
    <interactant intactId="EBI-10173507">
        <id>Q6UY14-3</id>
        <label>ADAMTSL4</label>
    </interactant>
    <organismsDiffer>false</organismsDiffer>
    <experiments>3</experiments>
</comment>
<comment type="interaction">
    <interactant intactId="EBI-2798728">
        <id>P61968</id>
    </interactant>
    <interactant intactId="EBI-3891843">
        <id>Q4VCS5-2</id>
        <label>AMOT</label>
    </interactant>
    <organismsDiffer>false</organismsDiffer>
    <experiments>3</experiments>
</comment>
<comment type="interaction">
    <interactant intactId="EBI-2798728">
        <id>P61968</id>
    </interactant>
    <interactant intactId="EBI-10187270">
        <id>Q9Y2J4-4</id>
        <label>AMOTL2</label>
    </interactant>
    <organismsDiffer>false</organismsDiffer>
    <experiments>3</experiments>
</comment>
<comment type="interaction">
    <interactant intactId="EBI-2798728">
        <id>P61968</id>
    </interactant>
    <interactant intactId="EBI-765971">
        <id>Q9HBZ2</id>
        <label>ARNT2</label>
    </interactant>
    <organismsDiffer>false</organismsDiffer>
    <experiments>3</experiments>
</comment>
<comment type="interaction">
    <interactant intactId="EBI-2798728">
        <id>P61968</id>
    </interactant>
    <interactant intactId="EBI-744695">
        <id>Q8N9N5</id>
        <label>BANP</label>
    </interactant>
    <organismsDiffer>false</organismsDiffer>
    <experiments>3</experiments>
</comment>
<comment type="interaction">
    <interactant intactId="EBI-2798728">
        <id>P61968</id>
    </interactant>
    <interactant intactId="EBI-11524452">
        <id>Q8N9N5-2</id>
        <label>BANP</label>
    </interactant>
    <organismsDiffer>false</organismsDiffer>
    <experiments>3</experiments>
</comment>
<comment type="interaction">
    <interactant intactId="EBI-2798728">
        <id>P61968</id>
    </interactant>
    <interactant intactId="EBI-748297">
        <id>Q9BXC9</id>
        <label>BBS2</label>
    </interactant>
    <organismsDiffer>false</organismsDiffer>
    <experiments>3</experiments>
</comment>
<comment type="interaction">
    <interactant intactId="EBI-2798728">
        <id>P61968</id>
    </interactant>
    <interactant intactId="EBI-1050106">
        <id>O75934</id>
        <label>BCAS2</label>
    </interactant>
    <organismsDiffer>false</organismsDiffer>
    <experiments>3</experiments>
</comment>
<comment type="interaction">
    <interactant intactId="EBI-2798728">
        <id>P61968</id>
    </interactant>
    <interactant intactId="EBI-517623">
        <id>Q96CA5</id>
        <label>BIRC7</label>
    </interactant>
    <organismsDiffer>false</organismsDiffer>
    <experiments>3</experiments>
</comment>
<comment type="interaction">
    <interactant intactId="EBI-2798728">
        <id>P61968</id>
    </interactant>
    <interactant intactId="EBI-739580">
        <id>Q13137</id>
        <label>CALCOCO2</label>
    </interactant>
    <organismsDiffer>false</organismsDiffer>
    <experiments>3</experiments>
</comment>
<comment type="interaction">
    <interactant intactId="EBI-2798728">
        <id>P61968</id>
    </interactant>
    <interactant intactId="EBI-10171570">
        <id>Q68D86</id>
        <label>CCDC102B</label>
    </interactant>
    <organismsDiffer>false</organismsDiffer>
    <experiments>6</experiments>
</comment>
<comment type="interaction">
    <interactant intactId="EBI-2798728">
        <id>P61968</id>
    </interactant>
    <interactant intactId="EBI-744556">
        <id>Q96HB5</id>
        <label>CCDC120</label>
    </interactant>
    <organismsDiffer>false</organismsDiffer>
    <experiments>3</experiments>
</comment>
<comment type="interaction">
    <interactant intactId="EBI-2798728">
        <id>P61968</id>
    </interactant>
    <interactant intactId="EBI-743488">
        <id>Q96L14</id>
        <label>CEP170P1</label>
    </interactant>
    <organismsDiffer>false</organismsDiffer>
    <experiments>3</experiments>
</comment>
<comment type="interaction">
    <interactant intactId="EBI-2798728">
        <id>P61968</id>
    </interactant>
    <interactant intactId="EBI-3866319">
        <id>Q9Y2V7</id>
        <label>COG6</label>
    </interactant>
    <organismsDiffer>false</organismsDiffer>
    <experiments>3</experiments>
</comment>
<comment type="interaction">
    <interactant intactId="EBI-2798728">
        <id>P61968</id>
    </interactant>
    <interactant intactId="EBI-3197866">
        <id>Q9UBG3</id>
        <label>CRNN</label>
    </interactant>
    <organismsDiffer>false</organismsDiffer>
    <experiments>3</experiments>
</comment>
<comment type="interaction">
    <interactant intactId="EBI-2798728">
        <id>P61968</id>
    </interactant>
    <interactant intactId="EBI-974082">
        <id>P43320</id>
        <label>CRYBB2</label>
    </interactant>
    <organismsDiffer>false</organismsDiffer>
    <experiments>3</experiments>
</comment>
<comment type="interaction">
    <interactant intactId="EBI-2798728">
        <id>P61968</id>
    </interactant>
    <interactant intactId="EBI-10171902">
        <id>P56545-3</id>
        <label>CTBP2</label>
    </interactant>
    <organismsDiffer>false</organismsDiffer>
    <experiments>3</experiments>
</comment>
<comment type="interaction">
    <interactant intactId="EBI-2798728">
        <id>P61968</id>
    </interactant>
    <interactant intactId="EBI-3867333">
        <id>A8MQ03</id>
        <label>CYSRT1</label>
    </interactant>
    <organismsDiffer>false</organismsDiffer>
    <experiments>3</experiments>
</comment>
<comment type="interaction">
    <interactant intactId="EBI-2798728">
        <id>P61968</id>
    </interactant>
    <interactant intactId="EBI-1055572">
        <id>P17661</id>
        <label>DES</label>
    </interactant>
    <organismsDiffer>false</organismsDiffer>
    <experiments>3</experiments>
</comment>
<comment type="interaction">
    <interactant intactId="EBI-2798728">
        <id>P61968</id>
    </interactant>
    <interactant intactId="EBI-947964">
        <id>Q16610</id>
        <label>ECM1</label>
    </interactant>
    <organismsDiffer>false</organismsDiffer>
    <experiments>3</experiments>
</comment>
<comment type="interaction">
    <interactant intactId="EBI-2798728">
        <id>P61968</id>
    </interactant>
    <interactant intactId="EBI-1042535">
        <id>Q2NKX8</id>
        <label>ERCC6L</label>
    </interactant>
    <organismsDiffer>false</organismsDiffer>
    <experiments>3</experiments>
</comment>
<comment type="interaction">
    <interactant intactId="EBI-2798728">
        <id>P61968</id>
    </interactant>
    <interactant intactId="EBI-371922">
        <id>Q96B26</id>
        <label>EXOSC8</label>
    </interactant>
    <organismsDiffer>false</organismsDiffer>
    <experiments>3</experiments>
</comment>
<comment type="interaction">
    <interactant intactId="EBI-2798728">
        <id>P61968</id>
    </interactant>
    <interactant intactId="EBI-12958227">
        <id>Q86W67</id>
        <label>FAM228A</label>
    </interactant>
    <organismsDiffer>false</organismsDiffer>
    <experiments>3</experiments>
</comment>
<comment type="interaction">
    <interactant intactId="EBI-2798728">
        <id>P61968</id>
    </interactant>
    <interactant intactId="EBI-741101">
        <id>Q13643</id>
        <label>FHL3</label>
    </interactant>
    <organismsDiffer>false</organismsDiffer>
    <experiments>3</experiments>
</comment>
<comment type="interaction">
    <interactant intactId="EBI-2798728">
        <id>P61968</id>
    </interactant>
    <interactant intactId="EBI-618165">
        <id>Q06547</id>
        <label>GABPB1</label>
    </interactant>
    <organismsDiffer>false</organismsDiffer>
    <experiments>6</experiments>
</comment>
<comment type="interaction">
    <interactant intactId="EBI-2798728">
        <id>P61968</id>
    </interactant>
    <interactant intactId="EBI-618309">
        <id>Q08379</id>
        <label>GOLGA2</label>
    </interactant>
    <organismsDiffer>false</organismsDiffer>
    <experiments>6</experiments>
</comment>
<comment type="interaction">
    <interactant intactId="EBI-2798728">
        <id>P61968</id>
    </interactant>
    <interactant intactId="EBI-5916454">
        <id>A6NEM1</id>
        <label>GOLGA6L9</label>
    </interactant>
    <organismsDiffer>false</organismsDiffer>
    <experiments>3</experiments>
</comment>
<comment type="interaction">
    <interactant intactId="EBI-2798728">
        <id>P61968</id>
    </interactant>
    <interactant intactId="EBI-10219092">
        <id>Q6ISB3</id>
        <label>GRHL2</label>
    </interactant>
    <organismsDiffer>false</organismsDiffer>
    <experiments>7</experiments>
</comment>
<comment type="interaction">
    <interactant intactId="EBI-2798728">
        <id>P61968</id>
    </interactant>
    <interactant intactId="EBI-12057631">
        <id>A0A087WSW0</id>
        <label>HELT</label>
    </interactant>
    <organismsDiffer>false</organismsDiffer>
    <experiments>3</experiments>
</comment>
<comment type="interaction">
    <interactant intactId="EBI-2798728">
        <id>P61968</id>
    </interactant>
    <interactant intactId="EBI-740220">
        <id>O14964</id>
        <label>HGS</label>
    </interactant>
    <organismsDiffer>false</organismsDiffer>
    <experiments>3</experiments>
</comment>
<comment type="interaction">
    <interactant intactId="EBI-2798728">
        <id>P61968</id>
    </interactant>
    <interactant intactId="EBI-7116203">
        <id>O75031</id>
        <label>HSF2BP</label>
    </interactant>
    <organismsDiffer>false</organismsDiffer>
    <experiments>3</experiments>
</comment>
<comment type="interaction">
    <interactant intactId="EBI-2798728">
        <id>P61968</id>
    </interactant>
    <interactant intactId="EBI-1387094">
        <id>Q02535</id>
        <label>ID3</label>
    </interactant>
    <organismsDiffer>false</organismsDiffer>
    <experiments>3</experiments>
</comment>
<comment type="interaction">
    <interactant intactId="EBI-2798728">
        <id>P61968</id>
    </interactant>
    <interactant intactId="EBI-11522367">
        <id>Q13422-7</id>
        <label>IKZF1</label>
    </interactant>
    <organismsDiffer>false</organismsDiffer>
    <experiments>3</experiments>
</comment>
<comment type="interaction">
    <interactant intactId="EBI-2798728">
        <id>P61968</id>
    </interactant>
    <interactant intactId="EBI-747204">
        <id>Q9UKT9</id>
        <label>IKZF3</label>
    </interactant>
    <organismsDiffer>false</organismsDiffer>
    <experiments>3</experiments>
</comment>
<comment type="interaction">
    <interactant intactId="EBI-2798728">
        <id>P61968</id>
    </interactant>
    <interactant intactId="EBI-602041">
        <id>Q15811</id>
        <label>ITSN1</label>
    </interactant>
    <organismsDiffer>false</organismsDiffer>
    <experiments>3</experiments>
</comment>
<comment type="interaction">
    <interactant intactId="EBI-2798728">
        <id>P61968</id>
    </interactant>
    <interactant intactId="EBI-2556193">
        <id>Q63ZY3</id>
        <label>KANK2</label>
    </interactant>
    <organismsDiffer>false</organismsDiffer>
    <experiments>6</experiments>
</comment>
<comment type="interaction">
    <interactant intactId="EBI-2798728">
        <id>P61968</id>
    </interactant>
    <interactant intactId="EBI-715394">
        <id>Q9H079</id>
        <label>KATNBL1</label>
    </interactant>
    <organismsDiffer>false</organismsDiffer>
    <experiments>3</experiments>
</comment>
<comment type="interaction">
    <interactant intactId="EBI-2798728">
        <id>P61968</id>
    </interactant>
    <interactant intactId="EBI-10181113">
        <id>Q8N8K9</id>
        <label>KIAA1958</label>
    </interactant>
    <organismsDiffer>false</organismsDiffer>
    <experiments>6</experiments>
</comment>
<comment type="interaction">
    <interactant intactId="EBI-2798728">
        <id>P61968</id>
    </interactant>
    <interactant intactId="EBI-739566">
        <id>P19012</id>
        <label>KRT15</label>
    </interactant>
    <organismsDiffer>false</organismsDiffer>
    <experiments>6</experiments>
</comment>
<comment type="interaction">
    <interactant intactId="EBI-2798728">
        <id>P61968</id>
    </interactant>
    <interactant intactId="EBI-948001">
        <id>Q15323</id>
        <label>KRT31</label>
    </interactant>
    <organismsDiffer>false</organismsDiffer>
    <experiments>6</experiments>
</comment>
<comment type="interaction">
    <interactant intactId="EBI-2798728">
        <id>P61968</id>
    </interactant>
    <interactant intactId="EBI-1049638">
        <id>Q14525</id>
        <label>KRT33B</label>
    </interactant>
    <organismsDiffer>false</organismsDiffer>
    <experiments>3</experiments>
</comment>
<comment type="interaction">
    <interactant intactId="EBI-2798728">
        <id>P61968</id>
    </interactant>
    <interactant intactId="EBI-1047093">
        <id>O76011</id>
        <label>KRT34</label>
    </interactant>
    <organismsDiffer>false</organismsDiffer>
    <experiments>5</experiments>
</comment>
<comment type="interaction">
    <interactant intactId="EBI-2798728">
        <id>P61968</id>
    </interactant>
    <interactant intactId="EBI-1047263">
        <id>O76015</id>
        <label>KRT38</label>
    </interactant>
    <organismsDiffer>false</organismsDiffer>
    <experiments>3</experiments>
</comment>
<comment type="interaction">
    <interactant intactId="EBI-2798728">
        <id>P61968</id>
    </interactant>
    <interactant intactId="EBI-11958242">
        <id>Q6A163</id>
        <label>KRT39</label>
    </interactant>
    <organismsDiffer>false</organismsDiffer>
    <experiments>3</experiments>
</comment>
<comment type="interaction">
    <interactant intactId="EBI-2798728">
        <id>P61968</id>
    </interactant>
    <interactant intactId="EBI-10171697">
        <id>Q6A162</id>
        <label>KRT40</label>
    </interactant>
    <organismsDiffer>false</organismsDiffer>
    <experiments>3</experiments>
</comment>
<comment type="interaction">
    <interactant intactId="EBI-2798728">
        <id>P61968</id>
    </interactant>
    <interactant intactId="EBI-968660">
        <id>Q7RTS7</id>
        <label>KRT74</label>
    </interactant>
    <organismsDiffer>false</organismsDiffer>
    <experiments>3</experiments>
</comment>
<comment type="interaction">
    <interactant intactId="EBI-2798728">
        <id>P61968</id>
    </interactant>
    <interactant intactId="EBI-2949715">
        <id>O95678</id>
        <label>KRT75</label>
    </interactant>
    <organismsDiffer>false</organismsDiffer>
    <experiments>3</experiments>
</comment>
<comment type="interaction">
    <interactant intactId="EBI-2798728">
        <id>P61968</id>
    </interactant>
    <interactant intactId="EBI-2952745">
        <id>Q01546</id>
        <label>KRT76</label>
    </interactant>
    <organismsDiffer>false</organismsDiffer>
    <experiments>3</experiments>
</comment>
<comment type="interaction">
    <interactant intactId="EBI-2798728">
        <id>P61968</id>
    </interactant>
    <interactant intactId="EBI-1052037">
        <id>Q8IUC1</id>
        <label>KRTAP11-1</label>
    </interactant>
    <organismsDiffer>false</organismsDiffer>
    <experiments>3</experiments>
</comment>
<comment type="interaction">
    <interactant intactId="EBI-2798728">
        <id>P61968</id>
    </interactant>
    <interactant intactId="EBI-9996449">
        <id>Q9BYR8</id>
        <label>KRTAP3-1</label>
    </interactant>
    <organismsDiffer>false</organismsDiffer>
    <experiments>3</experiments>
</comment>
<comment type="interaction">
    <interactant intactId="EBI-2798728">
        <id>P61968</id>
    </interactant>
    <interactant intactId="EBI-12351611">
        <id>Q16719-2</id>
        <label>KYNU</label>
    </interactant>
    <organismsDiffer>false</organismsDiffer>
    <experiments>3</experiments>
</comment>
<comment type="interaction">
    <interactant intactId="EBI-2798728">
        <id>P61968</id>
    </interactant>
    <interactant intactId="EBI-11985629">
        <id>Q96JM7-2</id>
        <label>L3MBTL3</label>
    </interactant>
    <organismsDiffer>false</organismsDiffer>
    <experiments>3</experiments>
</comment>
<comment type="interaction">
    <interactant intactId="EBI-2798728">
        <id>P61968</id>
    </interactant>
    <interactant intactId="EBI-9088686">
        <id>Q14847-2</id>
        <label>LASP1</label>
    </interactant>
    <organismsDiffer>false</organismsDiffer>
    <experiments>3</experiments>
</comment>
<comment type="interaction">
    <interactant intactId="EBI-2798728">
        <id>P61968</id>
    </interactant>
    <interactant intactId="EBI-677177">
        <id>Q86U70</id>
        <label>LDB1</label>
    </interactant>
    <organismsDiffer>false</organismsDiffer>
    <experiments>6</experiments>
</comment>
<comment type="interaction">
    <interactant intactId="EBI-2798728">
        <id>P61968</id>
    </interactant>
    <interactant intactId="EBI-11979761">
        <id>Q86U70-2</id>
        <label>LDB1</label>
    </interactant>
    <organismsDiffer>false</organismsDiffer>
    <experiments>8</experiments>
</comment>
<comment type="interaction">
    <interactant intactId="EBI-2798728">
        <id>P61968</id>
    </interactant>
    <interactant intactId="EBI-2865580">
        <id>O43679</id>
        <label>LDB2</label>
    </interactant>
    <organismsDiffer>false</organismsDiffer>
    <experiments>6</experiments>
</comment>
<comment type="interaction">
    <interactant intactId="EBI-2798728">
        <id>P61968</id>
    </interactant>
    <interactant intactId="EBI-11959475">
        <id>P25791-3</id>
        <label>LMO2</label>
    </interactant>
    <organismsDiffer>false</organismsDiffer>
    <experiments>3</experiments>
</comment>
<comment type="interaction">
    <interactant intactId="EBI-2798728">
        <id>P61968</id>
    </interactant>
    <interactant intactId="EBI-1216080">
        <id>Q9Y250</id>
        <label>LZTS1</label>
    </interactant>
    <organismsDiffer>false</organismsDiffer>
    <experiments>3</experiments>
</comment>
<comment type="interaction">
    <interactant intactId="EBI-2798728">
        <id>P61968</id>
    </interactant>
    <interactant intactId="EBI-11987923">
        <id>P59942</id>
        <label>MCCD1</label>
    </interactant>
    <organismsDiffer>false</organismsDiffer>
    <experiments>3</experiments>
</comment>
<comment type="interaction">
    <interactant intactId="EBI-2798728">
        <id>P61968</id>
    </interactant>
    <interactant intactId="EBI-8487781">
        <id>Q8N6F8</id>
        <label>METTL27</label>
    </interactant>
    <organismsDiffer>false</organismsDiffer>
    <experiments>3</experiments>
</comment>
<comment type="interaction">
    <interactant intactId="EBI-2798728">
        <id>P61968</id>
    </interactant>
    <interactant intactId="EBI-10172526">
        <id>Q9UJV3-2</id>
        <label>MID2</label>
    </interactant>
    <organismsDiffer>false</organismsDiffer>
    <experiments>3</experiments>
</comment>
<comment type="interaction">
    <interactant intactId="EBI-2798728">
        <id>P61968</id>
    </interactant>
    <interactant intactId="EBI-11522433">
        <id>Q5JR59-3</id>
        <label>MTUS2</label>
    </interactant>
    <organismsDiffer>false</organismsDiffer>
    <experiments>4</experiments>
</comment>
<comment type="interaction">
    <interactant intactId="EBI-2798728">
        <id>P61968</id>
    </interactant>
    <interactant intactId="EBI-488878">
        <id>P15172</id>
        <label>MYOD1</label>
    </interactant>
    <organismsDiffer>false</organismsDiffer>
    <experiments>3</experiments>
</comment>
<comment type="interaction">
    <interactant intactId="EBI-2798728">
        <id>P61968</id>
    </interactant>
    <interactant intactId="EBI-5662487">
        <id>Q8TDC0</id>
        <label>MYOZ3</label>
    </interactant>
    <organismsDiffer>false</organismsDiffer>
    <experiments>3</experiments>
</comment>
<comment type="interaction">
    <interactant intactId="EBI-2798728">
        <id>P61968</id>
    </interactant>
    <interactant intactId="EBI-2512055">
        <id>O15049</id>
        <label>N4BP3</label>
    </interactant>
    <organismsDiffer>false</organismsDiffer>
    <experiments>3</experiments>
</comment>
<comment type="interaction">
    <interactant intactId="EBI-2798728">
        <id>P61968</id>
    </interactant>
    <interactant intactId="EBI-10271199">
        <id>Q8NI38</id>
        <label>NFKBID</label>
    </interactant>
    <organismsDiffer>false</organismsDiffer>
    <experiments>3</experiments>
</comment>
<comment type="interaction">
    <interactant intactId="EBI-2798728">
        <id>P61968</id>
    </interactant>
    <interactant intactId="EBI-11956831">
        <id>Q13952-2</id>
        <label>NFYC</label>
    </interactant>
    <organismsDiffer>false</organismsDiffer>
    <experiments>3</experiments>
</comment>
<comment type="interaction">
    <interactant intactId="EBI-2798728">
        <id>P61968</id>
    </interactant>
    <interactant intactId="EBI-744871">
        <id>O00746</id>
        <label>NME4</label>
    </interactant>
    <organismsDiffer>false</organismsDiffer>
    <experiments>3</experiments>
</comment>
<comment type="interaction">
    <interactant intactId="EBI-2798728">
        <id>P61968</id>
    </interactant>
    <interactant intactId="EBI-10203843">
        <id>Q15233-2</id>
        <label>NONO</label>
    </interactant>
    <organismsDiffer>false</organismsDiffer>
    <experiments>3</experiments>
</comment>
<comment type="interaction">
    <interactant intactId="EBI-2798728">
        <id>P61968</id>
    </interactant>
    <interactant intactId="EBI-11742836">
        <id>Q16656-4</id>
        <label>NRF1</label>
    </interactant>
    <organismsDiffer>false</organismsDiffer>
    <experiments>3</experiments>
</comment>
<comment type="interaction">
    <interactant intactId="EBI-2798728">
        <id>P61968</id>
    </interactant>
    <interactant intactId="EBI-1105124">
        <id>Q5VU43</id>
        <label>PDE4DIP</label>
    </interactant>
    <organismsDiffer>false</organismsDiffer>
    <experiments>4</experiments>
</comment>
<comment type="interaction">
    <interactant intactId="EBI-2798728">
        <id>P61968</id>
    </interactant>
    <interactant intactId="EBI-1043580">
        <id>Q9BRX2</id>
        <label>PELO</label>
    </interactant>
    <organismsDiffer>false</organismsDiffer>
    <experiments>3</experiments>
</comment>
<comment type="interaction">
    <interactant intactId="EBI-2798728">
        <id>P61968</id>
    </interactant>
    <interactant intactId="EBI-1054296">
        <id>O15055</id>
        <label>PER2</label>
    </interactant>
    <organismsDiffer>false</organismsDiffer>
    <experiments>3</experiments>
</comment>
<comment type="interaction">
    <interactant intactId="EBI-2798728">
        <id>P61968</id>
    </interactant>
    <interactant intactId="EBI-2798044">
        <id>Q2TAL8</id>
        <label>QRICH1</label>
    </interactant>
    <organismsDiffer>false</organismsDiffer>
    <experiments>3</experiments>
</comment>
<comment type="interaction">
    <interactant intactId="EBI-2798728">
        <id>P61968</id>
    </interactant>
    <interactant intactId="EBI-1210429">
        <id>Q9NYW8</id>
        <label>RBAK</label>
    </interactant>
    <organismsDiffer>false</organismsDiffer>
    <experiments>3</experiments>
</comment>
<comment type="interaction">
    <interactant intactId="EBI-2798728">
        <id>P61968</id>
    </interactant>
    <interactant intactId="EBI-10203615">
        <id>Q99708-2</id>
        <label>RBBP8</label>
    </interactant>
    <organismsDiffer>false</organismsDiffer>
    <experiments>3</experiments>
</comment>
<comment type="interaction">
    <interactant intactId="EBI-2798728">
        <id>P61968</id>
    </interactant>
    <interactant intactId="EBI-740322">
        <id>Q93062</id>
        <label>RBPMS</label>
    </interactant>
    <organismsDiffer>false</organismsDiffer>
    <experiments>3</experiments>
</comment>
<comment type="interaction">
    <interactant intactId="EBI-2798728">
        <id>P61968</id>
    </interactant>
    <interactant intactId="EBI-948278">
        <id>Q15293</id>
        <label>RCN1</label>
    </interactant>
    <organismsDiffer>false</organismsDiffer>
    <experiments>3</experiments>
</comment>
<comment type="interaction">
    <interactant intactId="EBI-2798728">
        <id>P61968</id>
    </interactant>
    <interactant intactId="EBI-10286004">
        <id>Q86WS4</id>
        <label>REDIC1</label>
    </interactant>
    <organismsDiffer>false</organismsDiffer>
    <experiments>3</experiments>
</comment>
<comment type="interaction">
    <interactant intactId="EBI-2798728">
        <id>P61968</id>
    </interactant>
    <interactant intactId="EBI-373337">
        <id>O76064</id>
        <label>RNF8</label>
    </interactant>
    <organismsDiffer>false</organismsDiffer>
    <experiments>3</experiments>
</comment>
<comment type="interaction">
    <interactant intactId="EBI-2798728">
        <id>P61968</id>
    </interactant>
    <interactant intactId="EBI-1378139">
        <id>Q9HAT0</id>
        <label>ROPN1</label>
    </interactant>
    <organismsDiffer>false</organismsDiffer>
    <experiments>3</experiments>
</comment>
<comment type="interaction">
    <interactant intactId="EBI-2798728">
        <id>P61968</id>
    </interactant>
    <interactant intactId="EBI-12169267">
        <id>Q9H0K4</id>
        <label>RSPH6A</label>
    </interactant>
    <organismsDiffer>false</organismsDiffer>
    <experiments>3</experiments>
</comment>
<comment type="interaction">
    <interactant intactId="EBI-2798728">
        <id>P61968</id>
    </interactant>
    <interactant intactId="EBI-12000762">
        <id>Q7Z5V6-2</id>
        <label>SAXO4</label>
    </interactant>
    <organismsDiffer>false</organismsDiffer>
    <experiments>3</experiments>
</comment>
<comment type="interaction">
    <interactant intactId="EBI-2798728">
        <id>P61968</id>
    </interactant>
    <interactant intactId="EBI-12806032">
        <id>Q16348</id>
        <label>SLC15A2</label>
    </interactant>
    <organismsDiffer>false</organismsDiffer>
    <experiments>3</experiments>
</comment>
<comment type="interaction">
    <interactant intactId="EBI-2798728">
        <id>P61968</id>
    </interactant>
    <interactant intactId="EBI-347263">
        <id>Q13485</id>
        <label>SMAD4</label>
    </interactant>
    <organismsDiffer>false</organismsDiffer>
    <experiments>8</experiments>
</comment>
<comment type="interaction">
    <interactant intactId="EBI-2798728">
        <id>P61968</id>
    </interactant>
    <interactant intactId="EBI-1186119">
        <id>P51692</id>
        <label>STAT5B</label>
    </interactant>
    <organismsDiffer>false</organismsDiffer>
    <experiments>3</experiments>
</comment>
<comment type="interaction">
    <interactant intactId="EBI-2798728">
        <id>P61968</id>
    </interactant>
    <interactant intactId="EBI-3921347">
        <id>P51687</id>
        <label>SUOX</label>
    </interactant>
    <organismsDiffer>false</organismsDiffer>
    <experiments>3</experiments>
</comment>
<comment type="interaction">
    <interactant intactId="EBI-2798728">
        <id>P61968</id>
    </interactant>
    <interactant intactId="EBI-533224">
        <id>P15884</id>
        <label>TCF4</label>
    </interactant>
    <organismsDiffer>false</organismsDiffer>
    <experiments>3</experiments>
</comment>
<comment type="interaction">
    <interactant intactId="EBI-2798728">
        <id>P61968</id>
    </interactant>
    <interactant intactId="EBI-13636688">
        <id>P15884-3</id>
        <label>TCF4</label>
    </interactant>
    <organismsDiffer>false</organismsDiffer>
    <experiments>3</experiments>
</comment>
<comment type="interaction">
    <interactant intactId="EBI-2798728">
        <id>P61968</id>
    </interactant>
    <interactant intactId="EBI-6674697">
        <id>Q8IWB6</id>
        <label>TEX14</label>
    </interactant>
    <organismsDiffer>false</organismsDiffer>
    <experiments>3</experiments>
</comment>
<comment type="interaction">
    <interactant intactId="EBI-2798728">
        <id>P61968</id>
    </interactant>
    <interactant intactId="EBI-1105213">
        <id>Q9UBB9</id>
        <label>TFIP11</label>
    </interactant>
    <organismsDiffer>false</organismsDiffer>
    <experiments>6</experiments>
</comment>
<comment type="interaction">
    <interactant intactId="EBI-2798728">
        <id>P61968</id>
    </interactant>
    <interactant intactId="EBI-717810">
        <id>Q08117</id>
        <label>TLE5</label>
    </interactant>
    <organismsDiffer>false</organismsDiffer>
    <experiments>3</experiments>
</comment>
<comment type="interaction">
    <interactant intactId="EBI-2798728">
        <id>P61968</id>
    </interactant>
    <interactant intactId="EBI-11741437">
        <id>Q08117-2</id>
        <label>TLE5</label>
    </interactant>
    <organismsDiffer>false</organismsDiffer>
    <experiments>3</experiments>
</comment>
<comment type="interaction">
    <interactant intactId="EBI-2798728">
        <id>P61968</id>
    </interactant>
    <interactant intactId="EBI-10175039">
        <id>Q13625-3</id>
        <label>TP53BP2</label>
    </interactant>
    <organismsDiffer>false</organismsDiffer>
    <experiments>3</experiments>
</comment>
<comment type="interaction">
    <interactant intactId="EBI-2798728">
        <id>P61968</id>
    </interactant>
    <interactant intactId="EBI-523498">
        <id>O00463</id>
        <label>TRAF5</label>
    </interactant>
    <organismsDiffer>false</organismsDiffer>
    <experiments>3</experiments>
</comment>
<comment type="interaction">
    <interactant intactId="EBI-2798728">
        <id>P61968</id>
    </interactant>
    <interactant intactId="EBI-719493">
        <id>P14373</id>
        <label>TRIM27</label>
    </interactant>
    <organismsDiffer>false</organismsDiffer>
    <experiments>3</experiments>
</comment>
<comment type="interaction">
    <interactant intactId="EBI-2798728">
        <id>P61968</id>
    </interactant>
    <interactant intactId="EBI-2130429">
        <id>Q9BYV2</id>
        <label>TRIM54</label>
    </interactant>
    <organismsDiffer>false</organismsDiffer>
    <experiments>3</experiments>
</comment>
<comment type="interaction">
    <interactant intactId="EBI-2798728">
        <id>P61968</id>
    </interactant>
    <interactant intactId="EBI-13339851">
        <id>Q6ZT98-3</id>
        <label>TTLL7</label>
    </interactant>
    <organismsDiffer>false</organismsDiffer>
    <experiments>3</experiments>
</comment>
<comment type="interaction">
    <interactant intactId="EBI-2798728">
        <id>P61968</id>
    </interactant>
    <interactant intactId="EBI-947187">
        <id>Q9UHD9</id>
        <label>UBQLN2</label>
    </interactant>
    <organismsDiffer>false</organismsDiffer>
    <experiments>3</experiments>
</comment>
<comment type="interaction">
    <interactant intactId="EBI-2798728">
        <id>P61968</id>
    </interactant>
    <interactant intactId="EBI-2803134">
        <id>Q2NL98</id>
        <label>VMAC</label>
    </interactant>
    <organismsDiffer>false</organismsDiffer>
    <experiments>3</experiments>
</comment>
<comment type="interaction">
    <interactant intactId="EBI-2798728">
        <id>P61968</id>
    </interactant>
    <interactant intactId="EBI-2799833">
        <id>Q8N1B4</id>
        <label>VPS52</label>
    </interactant>
    <organismsDiffer>false</organismsDiffer>
    <experiments>3</experiments>
</comment>
<comment type="interaction">
    <interactant intactId="EBI-2798728">
        <id>P61968</id>
    </interactant>
    <interactant intactId="EBI-740718">
        <id>O43298</id>
        <label>ZBTB43</label>
    </interactant>
    <organismsDiffer>false</organismsDiffer>
    <experiments>3</experiments>
</comment>
<comment type="interaction">
    <interactant intactId="EBI-2798728">
        <id>P61968</id>
    </interactant>
    <interactant intactId="EBI-12030590">
        <id>Q9H0C1</id>
        <label>ZMYND12</label>
    </interactant>
    <organismsDiffer>false</organismsDiffer>
    <experiments>3</experiments>
</comment>
<comment type="interaction">
    <interactant intactId="EBI-2798728">
        <id>P61968</id>
    </interactant>
    <interactant intactId="EBI-7101455">
        <id>P52742</id>
        <label>ZNF135</label>
    </interactant>
    <organismsDiffer>false</organismsDiffer>
    <experiments>3</experiments>
</comment>
<comment type="interaction">
    <interactant intactId="EBI-2798728">
        <id>P61968</id>
    </interactant>
    <interactant intactId="EBI-751960">
        <id>O95125</id>
        <label>ZNF202</label>
    </interactant>
    <organismsDiffer>false</organismsDiffer>
    <experiments>4</experiments>
</comment>
<comment type="interaction">
    <interactant intactId="EBI-2798728">
        <id>P61968</id>
    </interactant>
    <interactant intactId="EBI-12838388">
        <id>O14771</id>
        <label>ZNF213</label>
    </interactant>
    <organismsDiffer>false</organismsDiffer>
    <experiments>3</experiments>
</comment>
<comment type="interaction">
    <interactant intactId="EBI-2798728">
        <id>P61968</id>
    </interactant>
    <interactant intactId="EBI-10213894">
        <id>Q8NF99</id>
        <label>ZNF397</label>
    </interactant>
    <organismsDiffer>false</organismsDiffer>
    <experiments>3</experiments>
</comment>
<comment type="interaction">
    <interactant intactId="EBI-2798728">
        <id>P61968</id>
    </interactant>
    <interactant intactId="EBI-11741890">
        <id>Q86VK4-3</id>
        <label>ZNF410</label>
    </interactant>
    <organismsDiffer>false</organismsDiffer>
    <experiments>3</experiments>
</comment>
<comment type="interaction">
    <interactant intactId="EBI-2798728">
        <id>P61968</id>
    </interactant>
    <interactant intactId="EBI-11986485">
        <id>Q7Z7K2</id>
        <label>ZNF467</label>
    </interactant>
    <organismsDiffer>false</organismsDiffer>
    <experiments>3</experiments>
</comment>
<reference key="1">
    <citation type="journal article" date="1999" name="Biochim. Biophys. Acta">
        <title>Molecular cloning of LMO4, a new human LIM domain gene.</title>
        <authorList>
            <person name="Racevskis J."/>
            <person name="Dill A."/>
            <person name="Sparano J.A."/>
            <person name="Ruan H."/>
        </authorList>
    </citation>
    <scope>NUCLEOTIDE SEQUENCE [MRNA]</scope>
    <source>
        <tissue>Mammary tumor</tissue>
    </source>
</reference>
<reference key="2">
    <citation type="submission" date="2005-09" db="EMBL/GenBank/DDBJ databases">
        <authorList>
            <person name="Mural R.J."/>
            <person name="Istrail S."/>
            <person name="Sutton G.G."/>
            <person name="Florea L."/>
            <person name="Halpern A.L."/>
            <person name="Mobarry C.M."/>
            <person name="Lippert R."/>
            <person name="Walenz B."/>
            <person name="Shatkay H."/>
            <person name="Dew I."/>
            <person name="Miller J.R."/>
            <person name="Flanigan M.J."/>
            <person name="Edwards N.J."/>
            <person name="Bolanos R."/>
            <person name="Fasulo D."/>
            <person name="Halldorsson B.V."/>
            <person name="Hannenhalli S."/>
            <person name="Turner R."/>
            <person name="Yooseph S."/>
            <person name="Lu F."/>
            <person name="Nusskern D.R."/>
            <person name="Shue B.C."/>
            <person name="Zheng X.H."/>
            <person name="Zhong F."/>
            <person name="Delcher A.L."/>
            <person name="Huson D.H."/>
            <person name="Kravitz S.A."/>
            <person name="Mouchard L."/>
            <person name="Reinert K."/>
            <person name="Remington K.A."/>
            <person name="Clark A.G."/>
            <person name="Waterman M.S."/>
            <person name="Eichler E.E."/>
            <person name="Adams M.D."/>
            <person name="Hunkapiller M.W."/>
            <person name="Myers E.W."/>
            <person name="Venter J.C."/>
        </authorList>
    </citation>
    <scope>NUCLEOTIDE SEQUENCE [LARGE SCALE GENOMIC DNA]</scope>
</reference>
<reference key="3">
    <citation type="journal article" date="2004" name="Genome Res.">
        <title>The status, quality, and expansion of the NIH full-length cDNA project: the Mammalian Gene Collection (MGC).</title>
        <authorList>
            <consortium name="The MGC Project Team"/>
        </authorList>
    </citation>
    <scope>NUCLEOTIDE SEQUENCE [LARGE SCALE MRNA]</scope>
    <source>
        <tissue>Eye</tissue>
        <tissue>Lung</tissue>
        <tissue>PNS</tissue>
    </source>
</reference>
<reference key="4">
    <citation type="journal article" date="2013" name="J. Mol. Biol.">
        <title>Structural basis of the interaction of the breast cancer oncogene LMO4 with the tumour suppressor CtIP/RBBP8.</title>
        <authorList>
            <person name="Stokes P.H."/>
            <person name="Liew C.W."/>
            <person name="Kwan A.H."/>
            <person name="Foo P."/>
            <person name="Barker H.E."/>
            <person name="Djamirze A."/>
            <person name="O'Reilly V."/>
            <person name="Visvader J.E."/>
            <person name="Mackay J.P."/>
            <person name="Matthews J.M."/>
        </authorList>
    </citation>
    <scope>INTERACTION WITH RPPB8</scope>
</reference>
<keyword id="KW-0002">3D-structure</keyword>
<keyword id="KW-0440">LIM domain</keyword>
<keyword id="KW-0479">Metal-binding</keyword>
<keyword id="KW-1267">Proteomics identification</keyword>
<keyword id="KW-1185">Reference proteome</keyword>
<keyword id="KW-0677">Repeat</keyword>
<keyword id="KW-0804">Transcription</keyword>
<keyword id="KW-0805">Transcription regulation</keyword>
<keyword id="KW-0862">Zinc</keyword>
<dbReference type="EMBL" id="U24576">
    <property type="protein sequence ID" value="AAB51073.1"/>
    <property type="molecule type" value="mRNA"/>
</dbReference>
<dbReference type="EMBL" id="CH471097">
    <property type="protein sequence ID" value="EAW73168.1"/>
    <property type="molecule type" value="Genomic_DNA"/>
</dbReference>
<dbReference type="EMBL" id="CH471097">
    <property type="protein sequence ID" value="EAW73169.1"/>
    <property type="molecule type" value="Genomic_DNA"/>
</dbReference>
<dbReference type="EMBL" id="BC003600">
    <property type="protein sequence ID" value="AAH03600.1"/>
    <property type="molecule type" value="mRNA"/>
</dbReference>
<dbReference type="EMBL" id="BC017673">
    <property type="protein sequence ID" value="AAH17673.1"/>
    <property type="molecule type" value="mRNA"/>
</dbReference>
<dbReference type="EMBL" id="BC065818">
    <property type="protein sequence ID" value="AAH65818.1"/>
    <property type="molecule type" value="mRNA"/>
</dbReference>
<dbReference type="CCDS" id="CCDS713.1"/>
<dbReference type="RefSeq" id="NP_001356420.1">
    <property type="nucleotide sequence ID" value="NM_001369491.1"/>
</dbReference>
<dbReference type="RefSeq" id="NP_006760.1">
    <property type="nucleotide sequence ID" value="NM_006769.4"/>
</dbReference>
<dbReference type="RefSeq" id="XP_005271348.1">
    <property type="nucleotide sequence ID" value="XM_005271291.3"/>
</dbReference>
<dbReference type="RefSeq" id="XP_047288897.1">
    <property type="nucleotide sequence ID" value="XM_047432941.1"/>
</dbReference>
<dbReference type="RefSeq" id="XP_054195298.1">
    <property type="nucleotide sequence ID" value="XM_054339323.1"/>
</dbReference>
<dbReference type="PDB" id="9F5B">
    <property type="method" value="X-ray"/>
    <property type="resolution" value="1.80 A"/>
    <property type="chains" value="A=16-152"/>
</dbReference>
<dbReference type="PDBsum" id="9F5B"/>
<dbReference type="BMRB" id="P61968"/>
<dbReference type="SMR" id="P61968"/>
<dbReference type="BioGRID" id="114113">
    <property type="interactions" value="151"/>
</dbReference>
<dbReference type="CORUM" id="P61968"/>
<dbReference type="DIP" id="DIP-41414N"/>
<dbReference type="FunCoup" id="P61968">
    <property type="interactions" value="300"/>
</dbReference>
<dbReference type="IntAct" id="P61968">
    <property type="interactions" value="138"/>
</dbReference>
<dbReference type="MINT" id="P61968"/>
<dbReference type="STRING" id="9606.ENSP00000359575"/>
<dbReference type="iPTMnet" id="P61968"/>
<dbReference type="PhosphoSitePlus" id="P61968"/>
<dbReference type="BioMuta" id="LMO4"/>
<dbReference type="jPOST" id="P61968"/>
<dbReference type="MassIVE" id="P61968"/>
<dbReference type="PaxDb" id="9606-ENSP00000359575"/>
<dbReference type="PeptideAtlas" id="P61968"/>
<dbReference type="ProteomicsDB" id="57350"/>
<dbReference type="Pumba" id="P61968"/>
<dbReference type="Antibodypedia" id="33592">
    <property type="antibodies" value="306 antibodies from 34 providers"/>
</dbReference>
<dbReference type="DNASU" id="8543"/>
<dbReference type="Ensembl" id="ENST00000370542.1">
    <property type="protein sequence ID" value="ENSP00000359573.1"/>
    <property type="gene ID" value="ENSG00000143013.13"/>
</dbReference>
<dbReference type="Ensembl" id="ENST00000370544.10">
    <property type="protein sequence ID" value="ENSP00000359575.4"/>
    <property type="gene ID" value="ENSG00000143013.13"/>
</dbReference>
<dbReference type="GeneID" id="8543"/>
<dbReference type="KEGG" id="hsa:8543"/>
<dbReference type="MANE-Select" id="ENST00000370544.10">
    <property type="protein sequence ID" value="ENSP00000359575.4"/>
    <property type="RefSeq nucleotide sequence ID" value="NM_006769.4"/>
    <property type="RefSeq protein sequence ID" value="NP_006760.1"/>
</dbReference>
<dbReference type="UCSC" id="uc001dmi.4">
    <property type="organism name" value="human"/>
</dbReference>
<dbReference type="AGR" id="HGNC:6644"/>
<dbReference type="CTD" id="8543"/>
<dbReference type="DisGeNET" id="8543"/>
<dbReference type="GeneCards" id="LMO4"/>
<dbReference type="HGNC" id="HGNC:6644">
    <property type="gene designation" value="LMO4"/>
</dbReference>
<dbReference type="HPA" id="ENSG00000143013">
    <property type="expression patterns" value="Tissue enhanced (brain)"/>
</dbReference>
<dbReference type="MIM" id="603129">
    <property type="type" value="gene"/>
</dbReference>
<dbReference type="neXtProt" id="NX_P61968"/>
<dbReference type="OpenTargets" id="ENSG00000143013"/>
<dbReference type="PharmGKB" id="PA30410"/>
<dbReference type="VEuPathDB" id="HostDB:ENSG00000143013"/>
<dbReference type="eggNOG" id="KOG0490">
    <property type="taxonomic scope" value="Eukaryota"/>
</dbReference>
<dbReference type="GeneTree" id="ENSGT00940000157730"/>
<dbReference type="HOGENOM" id="CLU_001357_7_1_1"/>
<dbReference type="InParanoid" id="P61968"/>
<dbReference type="OMA" id="SLPWKRC"/>
<dbReference type="OrthoDB" id="6352355at2759"/>
<dbReference type="PAN-GO" id="P61968">
    <property type="GO annotations" value="4 GO annotations based on evolutionary models"/>
</dbReference>
<dbReference type="PhylomeDB" id="P61968"/>
<dbReference type="TreeFam" id="TF351071"/>
<dbReference type="PathwayCommons" id="P61968"/>
<dbReference type="SignaLink" id="P61968"/>
<dbReference type="BioGRID-ORCS" id="8543">
    <property type="hits" value="27 hits in 1163 CRISPR screens"/>
</dbReference>
<dbReference type="CD-CODE" id="8C2F96ED">
    <property type="entry name" value="Centrosome"/>
</dbReference>
<dbReference type="ChiTaRS" id="LMO4">
    <property type="organism name" value="human"/>
</dbReference>
<dbReference type="GeneWiki" id="LMO4"/>
<dbReference type="GenomeRNAi" id="8543"/>
<dbReference type="Pharos" id="P61968">
    <property type="development level" value="Tbio"/>
</dbReference>
<dbReference type="PRO" id="PR:P61968"/>
<dbReference type="Proteomes" id="UP000005640">
    <property type="component" value="Chromosome 1"/>
</dbReference>
<dbReference type="RNAct" id="P61968">
    <property type="molecule type" value="protein"/>
</dbReference>
<dbReference type="Bgee" id="ENSG00000143013">
    <property type="expression patterns" value="Expressed in dorsolateral prefrontal cortex and 213 other cell types or tissues"/>
</dbReference>
<dbReference type="GO" id="GO:0031252">
    <property type="term" value="C:cell leading edge"/>
    <property type="evidence" value="ECO:0000250"/>
    <property type="project" value="UniProtKB"/>
</dbReference>
<dbReference type="GO" id="GO:0090575">
    <property type="term" value="C:RNA polymerase II transcription regulator complex"/>
    <property type="evidence" value="ECO:0007669"/>
    <property type="project" value="Ensembl"/>
</dbReference>
<dbReference type="GO" id="GO:0005667">
    <property type="term" value="C:transcription regulator complex"/>
    <property type="evidence" value="ECO:0000250"/>
    <property type="project" value="UniProtKB"/>
</dbReference>
<dbReference type="GO" id="GO:0140297">
    <property type="term" value="F:DNA-binding transcription factor binding"/>
    <property type="evidence" value="ECO:0000250"/>
    <property type="project" value="UniProtKB"/>
</dbReference>
<dbReference type="GO" id="GO:0046872">
    <property type="term" value="F:metal ion binding"/>
    <property type="evidence" value="ECO:0007669"/>
    <property type="project" value="UniProtKB-KW"/>
</dbReference>
<dbReference type="GO" id="GO:0003714">
    <property type="term" value="F:transcription corepressor activity"/>
    <property type="evidence" value="ECO:0007669"/>
    <property type="project" value="Ensembl"/>
</dbReference>
<dbReference type="GO" id="GO:0008045">
    <property type="term" value="P:motor neuron axon guidance"/>
    <property type="evidence" value="ECO:0007669"/>
    <property type="project" value="Ensembl"/>
</dbReference>
<dbReference type="GO" id="GO:0031333">
    <property type="term" value="P:negative regulation of protein-containing complex assembly"/>
    <property type="evidence" value="ECO:0007669"/>
    <property type="project" value="Ensembl"/>
</dbReference>
<dbReference type="GO" id="GO:0000122">
    <property type="term" value="P:negative regulation of transcription by RNA polymerase II"/>
    <property type="evidence" value="ECO:0007669"/>
    <property type="project" value="Ensembl"/>
</dbReference>
<dbReference type="GO" id="GO:0001843">
    <property type="term" value="P:neural tube closure"/>
    <property type="evidence" value="ECO:0000250"/>
    <property type="project" value="UniProtKB"/>
</dbReference>
<dbReference type="GO" id="GO:0033674">
    <property type="term" value="P:positive regulation of kinase activity"/>
    <property type="evidence" value="ECO:0000250"/>
    <property type="project" value="UniProtKB"/>
</dbReference>
<dbReference type="GO" id="GO:0045944">
    <property type="term" value="P:positive regulation of transcription by RNA polymerase II"/>
    <property type="evidence" value="ECO:0007669"/>
    <property type="project" value="Ensembl"/>
</dbReference>
<dbReference type="GO" id="GO:0050865">
    <property type="term" value="P:regulation of cell activation"/>
    <property type="evidence" value="ECO:0007669"/>
    <property type="project" value="Ensembl"/>
</dbReference>
<dbReference type="GO" id="GO:0042659">
    <property type="term" value="P:regulation of cell fate specification"/>
    <property type="evidence" value="ECO:0007669"/>
    <property type="project" value="Ensembl"/>
</dbReference>
<dbReference type="GO" id="GO:0030334">
    <property type="term" value="P:regulation of cell migration"/>
    <property type="evidence" value="ECO:0000250"/>
    <property type="project" value="UniProtKB"/>
</dbReference>
<dbReference type="GO" id="GO:0021527">
    <property type="term" value="P:spinal cord association neuron differentiation"/>
    <property type="evidence" value="ECO:0007669"/>
    <property type="project" value="Ensembl"/>
</dbReference>
<dbReference type="GO" id="GO:0021520">
    <property type="term" value="P:spinal cord motor neuron cell fate specification"/>
    <property type="evidence" value="ECO:0007669"/>
    <property type="project" value="Ensembl"/>
</dbReference>
<dbReference type="GO" id="GO:0048538">
    <property type="term" value="P:thymus development"/>
    <property type="evidence" value="ECO:0007669"/>
    <property type="project" value="Ensembl"/>
</dbReference>
<dbReference type="GO" id="GO:0021514">
    <property type="term" value="P:ventral spinal cord interneuron differentiation"/>
    <property type="evidence" value="ECO:0007669"/>
    <property type="project" value="Ensembl"/>
</dbReference>
<dbReference type="GO" id="GO:0003281">
    <property type="term" value="P:ventricular septum development"/>
    <property type="evidence" value="ECO:0007669"/>
    <property type="project" value="Ensembl"/>
</dbReference>
<dbReference type="CDD" id="cd09386">
    <property type="entry name" value="LIM1_LMO4"/>
    <property type="match status" value="1"/>
</dbReference>
<dbReference type="CDD" id="cd09387">
    <property type="entry name" value="LIM2_LMO4"/>
    <property type="match status" value="1"/>
</dbReference>
<dbReference type="FunFam" id="2.10.110.10:FF:000015">
    <property type="entry name" value="LIM domain only 3"/>
    <property type="match status" value="1"/>
</dbReference>
<dbReference type="FunFam" id="2.10.110.10:FF:000051">
    <property type="entry name" value="LIM domain transcription factor LMO4"/>
    <property type="match status" value="1"/>
</dbReference>
<dbReference type="Gene3D" id="2.10.110.10">
    <property type="entry name" value="Cysteine Rich Protein"/>
    <property type="match status" value="2"/>
</dbReference>
<dbReference type="IDEAL" id="IID00310"/>
<dbReference type="InterPro" id="IPR050945">
    <property type="entry name" value="LMO_RBTN_TF"/>
</dbReference>
<dbReference type="InterPro" id="IPR001781">
    <property type="entry name" value="Znf_LIM"/>
</dbReference>
<dbReference type="PANTHER" id="PTHR45787">
    <property type="entry name" value="LD11652P"/>
    <property type="match status" value="1"/>
</dbReference>
<dbReference type="PANTHER" id="PTHR45787:SF5">
    <property type="entry name" value="LIM DOMAIN TRANSCRIPTION FACTOR LMO4"/>
    <property type="match status" value="1"/>
</dbReference>
<dbReference type="Pfam" id="PF00412">
    <property type="entry name" value="LIM"/>
    <property type="match status" value="2"/>
</dbReference>
<dbReference type="SMART" id="SM00132">
    <property type="entry name" value="LIM"/>
    <property type="match status" value="2"/>
</dbReference>
<dbReference type="SUPFAM" id="SSF57716">
    <property type="entry name" value="Glucocorticoid receptor-like (DNA-binding domain)"/>
    <property type="match status" value="4"/>
</dbReference>
<dbReference type="PROSITE" id="PS00478">
    <property type="entry name" value="LIM_DOMAIN_1"/>
    <property type="match status" value="2"/>
</dbReference>
<dbReference type="PROSITE" id="PS50023">
    <property type="entry name" value="LIM_DOMAIN_2"/>
    <property type="match status" value="2"/>
</dbReference>
<feature type="chain" id="PRO_0000075820" description="LIM domain transcription factor LMO4">
    <location>
        <begin position="1"/>
        <end position="165"/>
    </location>
</feature>
<feature type="domain" description="LIM zinc-binding 1" evidence="2">
    <location>
        <begin position="23"/>
        <end position="83"/>
    </location>
</feature>
<feature type="domain" description="LIM zinc-binding 2" evidence="2">
    <location>
        <begin position="87"/>
        <end position="147"/>
    </location>
</feature>
<feature type="turn" evidence="4">
    <location>
        <begin position="24"/>
        <end position="26"/>
    </location>
</feature>
<feature type="strand" evidence="4">
    <location>
        <begin position="33"/>
        <end position="38"/>
    </location>
</feature>
<feature type="strand" evidence="4">
    <location>
        <begin position="41"/>
        <end position="43"/>
    </location>
</feature>
<feature type="helix" evidence="4">
    <location>
        <begin position="45"/>
        <end position="47"/>
    </location>
</feature>
<feature type="turn" evidence="4">
    <location>
        <begin position="51"/>
        <end position="53"/>
    </location>
</feature>
<feature type="helix" evidence="4">
    <location>
        <begin position="57"/>
        <end position="60"/>
    </location>
</feature>
<feature type="strand" evidence="4">
    <location>
        <begin position="62"/>
        <end position="67"/>
    </location>
</feature>
<feature type="strand" evidence="4">
    <location>
        <begin position="70"/>
        <end position="72"/>
    </location>
</feature>
<feature type="helix" evidence="4">
    <location>
        <begin position="74"/>
        <end position="81"/>
    </location>
</feature>
<feature type="turn" evidence="4">
    <location>
        <begin position="88"/>
        <end position="90"/>
    </location>
</feature>
<feature type="strand" evidence="4">
    <location>
        <begin position="98"/>
        <end position="103"/>
    </location>
</feature>
<feature type="strand" evidence="4">
    <location>
        <begin position="106"/>
        <end position="108"/>
    </location>
</feature>
<feature type="helix" evidence="4">
    <location>
        <begin position="110"/>
        <end position="112"/>
    </location>
</feature>
<feature type="turn" evidence="4">
    <location>
        <begin position="116"/>
        <end position="118"/>
    </location>
</feature>
<feature type="strand" evidence="4">
    <location>
        <begin position="127"/>
        <end position="131"/>
    </location>
</feature>
<feature type="strand" evidence="4">
    <location>
        <begin position="134"/>
        <end position="137"/>
    </location>
</feature>
<feature type="helix" evidence="4">
    <location>
        <begin position="138"/>
        <end position="140"/>
    </location>
</feature>
<feature type="helix" evidence="4">
    <location>
        <begin position="143"/>
        <end position="146"/>
    </location>
</feature>
<gene>
    <name type="primary">LMO4</name>
</gene>
<accession>P61968</accession>
<accession>D3DT23</accession>
<accession>O00158</accession>
<accession>O88894</accession>
<name>LMO4_HUMAN</name>
<sequence>MVNPGSSSQPPPVTAGSLSWKRCAGCGGKIADRFLLYAMDSYWHSRCLKCSCCQAQLGDIGTSCYTKSGMILCRNDYIRLFGNSGACSACGQSIPASELVMRAQGNVYHLKCFTCSTCRNRLVPGDRFHYINGSLFCEHDRPTALINGHLNSLQSNPLLPDQKVC</sequence>
<protein>
    <recommendedName>
        <fullName>LIM domain transcription factor LMO4</fullName>
    </recommendedName>
    <alternativeName>
        <fullName>Breast tumor autoantigen</fullName>
    </alternativeName>
    <alternativeName>
        <fullName>LIM domain only protein 4</fullName>
        <shortName>LMO-4</shortName>
    </alternativeName>
</protein>
<proteinExistence type="evidence at protein level"/>